<gene>
    <name type="primary">NAP1;2</name>
    <name type="synonym">NAP1_L2</name>
    <name type="ORF">OsI_20803</name>
</gene>
<dbReference type="EMBL" id="AJ438612">
    <property type="protein sequence ID" value="CAD27459.1"/>
    <property type="molecule type" value="mRNA"/>
</dbReference>
<dbReference type="EMBL" id="CM000130">
    <property type="protein sequence ID" value="EEC79609.1"/>
    <property type="molecule type" value="Genomic_DNA"/>
</dbReference>
<dbReference type="SMR" id="B8AW64"/>
<dbReference type="STRING" id="39946.B8AW64"/>
<dbReference type="EnsemblPlants" id="BGIOSGA017653-TA">
    <property type="protein sequence ID" value="BGIOSGA017653-PA"/>
    <property type="gene ID" value="BGIOSGA017653"/>
</dbReference>
<dbReference type="Gramene" id="BGIOSGA017653-TA">
    <property type="protein sequence ID" value="BGIOSGA017653-PA"/>
    <property type="gene ID" value="BGIOSGA017653"/>
</dbReference>
<dbReference type="HOGENOM" id="CLU_038841_4_0_1"/>
<dbReference type="OMA" id="YSGDFMY"/>
<dbReference type="Proteomes" id="UP000007015">
    <property type="component" value="Chromosome 5"/>
</dbReference>
<dbReference type="GO" id="GO:0005737">
    <property type="term" value="C:cytoplasm"/>
    <property type="evidence" value="ECO:0007669"/>
    <property type="project" value="UniProtKB-SubCell"/>
</dbReference>
<dbReference type="GO" id="GO:0005634">
    <property type="term" value="C:nucleus"/>
    <property type="evidence" value="ECO:0007669"/>
    <property type="project" value="UniProtKB-SubCell"/>
</dbReference>
<dbReference type="GO" id="GO:0042393">
    <property type="term" value="F:histone binding"/>
    <property type="evidence" value="ECO:0007669"/>
    <property type="project" value="UniProtKB-ARBA"/>
</dbReference>
<dbReference type="GO" id="GO:0000724">
    <property type="term" value="P:double-strand break repair via homologous recombination"/>
    <property type="evidence" value="ECO:0007669"/>
    <property type="project" value="UniProtKB-ARBA"/>
</dbReference>
<dbReference type="GO" id="GO:0006334">
    <property type="term" value="P:nucleosome assembly"/>
    <property type="evidence" value="ECO:0007669"/>
    <property type="project" value="InterPro"/>
</dbReference>
<dbReference type="FunFam" id="1.20.5.1500:FF:000001">
    <property type="entry name" value="Nucleosome assembly protein 1-like 1"/>
    <property type="match status" value="1"/>
</dbReference>
<dbReference type="FunFam" id="3.30.1120.90:FF:000005">
    <property type="entry name" value="Nucleosome assembly protein11"/>
    <property type="match status" value="1"/>
</dbReference>
<dbReference type="Gene3D" id="1.20.5.1500">
    <property type="match status" value="1"/>
</dbReference>
<dbReference type="Gene3D" id="3.30.1120.90">
    <property type="entry name" value="Nucleosome assembly protein"/>
    <property type="match status" value="1"/>
</dbReference>
<dbReference type="InterPro" id="IPR037231">
    <property type="entry name" value="NAP-like_sf"/>
</dbReference>
<dbReference type="InterPro" id="IPR002164">
    <property type="entry name" value="NAP_family"/>
</dbReference>
<dbReference type="PANTHER" id="PTHR11875">
    <property type="entry name" value="TESTIS-SPECIFIC Y-ENCODED PROTEIN"/>
    <property type="match status" value="1"/>
</dbReference>
<dbReference type="Pfam" id="PF00956">
    <property type="entry name" value="NAP"/>
    <property type="match status" value="1"/>
</dbReference>
<dbReference type="SUPFAM" id="SSF143113">
    <property type="entry name" value="NAP-like"/>
    <property type="match status" value="1"/>
</dbReference>
<evidence type="ECO:0000250" key="1"/>
<evidence type="ECO:0000250" key="2">
    <source>
        <dbReference type="UniProtKB" id="Q9SZI2"/>
    </source>
</evidence>
<evidence type="ECO:0000255" key="3"/>
<evidence type="ECO:0000256" key="4">
    <source>
        <dbReference type="SAM" id="MobiDB-lite"/>
    </source>
</evidence>
<evidence type="ECO:0000269" key="5">
    <source>
    </source>
</evidence>
<evidence type="ECO:0000269" key="6">
    <source>
    </source>
</evidence>
<evidence type="ECO:0000305" key="7"/>
<proteinExistence type="evidence at protein level"/>
<protein>
    <recommendedName>
        <fullName>Nucleosome assembly protein 1;2</fullName>
        <shortName>OsNAP1;2</shortName>
    </recommendedName>
    <alternativeName>
        <fullName>Nucleosome assembly protein 1-like 2</fullName>
        <shortName>OsNAP1_L2</shortName>
    </alternativeName>
</protein>
<comment type="function">
    <text evidence="1 5">May modulate chromatin structure by regulation of nucleosome assembly/disassembly.</text>
</comment>
<comment type="subunit">
    <text evidence="5">Binds preferentially histone H1 in vitro.</text>
</comment>
<comment type="subcellular location">
    <subcellularLocation>
        <location evidence="1">Nucleus</location>
    </subcellularLocation>
    <subcellularLocation>
        <location evidence="6">Cytoplasm</location>
    </subcellularLocation>
</comment>
<comment type="tissue specificity">
    <text evidence="5">Highly expressed in tissues exhibiting active cell-division activities, such as root and shoot meristems and young flowers.</text>
</comment>
<comment type="domain">
    <text>The acidic domain is probably involved in the interaction with histones.</text>
</comment>
<comment type="similarity">
    <text evidence="7">Belongs to the nucleosome assembly protein (NAP) family.</text>
</comment>
<sequence length="364" mass="41758">MSDGKDSLDLSGLGAAVPNAKELSAEDKANLVESIKNTLQGLAARHTDVLESLEPKVRKRVEVLREIQSQHDDLEAKFFEERAALEAKYQKMYEPLYSKRYEIVNGVVEVDGVTKEAADETPAEQKEEKGVPEFWLNAMKNHEILSEEIQERDEEALKYLKDIKWYRISEPKGFKLEFYFDTNPFFKNSVLTKTYHMIDEDEPILEKAIGTEIEWFPGKCLTQKVLKKKPKKGSKNTKPITKTENCESFFNFFSPPQVPDDDEEIDEDTAEQLQNQMEQDYDIGSTIRDKIIPHAVSWFTGEAAQDEDFEGIMDDEDDDDEDDDDDEDEDDEDDDEDDEDEKKGGRVPSGEGQQGERPAECKQQ</sequence>
<keyword id="KW-0143">Chaperone</keyword>
<keyword id="KW-0175">Coiled coil</keyword>
<keyword id="KW-0963">Cytoplasm</keyword>
<keyword id="KW-0449">Lipoprotein</keyword>
<keyword id="KW-0488">Methylation</keyword>
<keyword id="KW-0539">Nucleus</keyword>
<keyword id="KW-0636">Prenylation</keyword>
<keyword id="KW-1185">Reference proteome</keyword>
<reference key="1">
    <citation type="journal article" date="2003" name="Planta">
        <title>Regulation of biosynthesis and intracellular localization of rice and tobacco homologues of nucleosome assembly protein 1.</title>
        <authorList>
            <person name="Dong A."/>
            <person name="Zhu Y."/>
            <person name="Yu Y."/>
            <person name="Cao K."/>
            <person name="Sun C."/>
            <person name="Shen W.H."/>
        </authorList>
    </citation>
    <scope>NUCLEOTIDE SEQUENCE [MRNA]</scope>
    <scope>FUNCTION</scope>
    <scope>TISSUE SPECIFICITY</scope>
    <scope>SUBUNIT</scope>
    <source>
        <tissue>Root</tissue>
    </source>
</reference>
<reference key="2">
    <citation type="journal article" date="2005" name="PLoS Biol.">
        <title>The genomes of Oryza sativa: a history of duplications.</title>
        <authorList>
            <person name="Yu J."/>
            <person name="Wang J."/>
            <person name="Lin W."/>
            <person name="Li S."/>
            <person name="Li H."/>
            <person name="Zhou J."/>
            <person name="Ni P."/>
            <person name="Dong W."/>
            <person name="Hu S."/>
            <person name="Zeng C."/>
            <person name="Zhang J."/>
            <person name="Zhang Y."/>
            <person name="Li R."/>
            <person name="Xu Z."/>
            <person name="Li S."/>
            <person name="Li X."/>
            <person name="Zheng H."/>
            <person name="Cong L."/>
            <person name="Lin L."/>
            <person name="Yin J."/>
            <person name="Geng J."/>
            <person name="Li G."/>
            <person name="Shi J."/>
            <person name="Liu J."/>
            <person name="Lv H."/>
            <person name="Li J."/>
            <person name="Wang J."/>
            <person name="Deng Y."/>
            <person name="Ran L."/>
            <person name="Shi X."/>
            <person name="Wang X."/>
            <person name="Wu Q."/>
            <person name="Li C."/>
            <person name="Ren X."/>
            <person name="Wang J."/>
            <person name="Wang X."/>
            <person name="Li D."/>
            <person name="Liu D."/>
            <person name="Zhang X."/>
            <person name="Ji Z."/>
            <person name="Zhao W."/>
            <person name="Sun Y."/>
            <person name="Zhang Z."/>
            <person name="Bao J."/>
            <person name="Han Y."/>
            <person name="Dong L."/>
            <person name="Ji J."/>
            <person name="Chen P."/>
            <person name="Wu S."/>
            <person name="Liu J."/>
            <person name="Xiao Y."/>
            <person name="Bu D."/>
            <person name="Tan J."/>
            <person name="Yang L."/>
            <person name="Ye C."/>
            <person name="Zhang J."/>
            <person name="Xu J."/>
            <person name="Zhou Y."/>
            <person name="Yu Y."/>
            <person name="Zhang B."/>
            <person name="Zhuang S."/>
            <person name="Wei H."/>
            <person name="Liu B."/>
            <person name="Lei M."/>
            <person name="Yu H."/>
            <person name="Li Y."/>
            <person name="Xu H."/>
            <person name="Wei S."/>
            <person name="He X."/>
            <person name="Fang L."/>
            <person name="Zhang Z."/>
            <person name="Zhang Y."/>
            <person name="Huang X."/>
            <person name="Su Z."/>
            <person name="Tong W."/>
            <person name="Li J."/>
            <person name="Tong Z."/>
            <person name="Li S."/>
            <person name="Ye J."/>
            <person name="Wang L."/>
            <person name="Fang L."/>
            <person name="Lei T."/>
            <person name="Chen C.-S."/>
            <person name="Chen H.-C."/>
            <person name="Xu Z."/>
            <person name="Li H."/>
            <person name="Huang H."/>
            <person name="Zhang F."/>
            <person name="Xu H."/>
            <person name="Li N."/>
            <person name="Zhao C."/>
            <person name="Li S."/>
            <person name="Dong L."/>
            <person name="Huang Y."/>
            <person name="Li L."/>
            <person name="Xi Y."/>
            <person name="Qi Q."/>
            <person name="Li W."/>
            <person name="Zhang B."/>
            <person name="Hu W."/>
            <person name="Zhang Y."/>
            <person name="Tian X."/>
            <person name="Jiao Y."/>
            <person name="Liang X."/>
            <person name="Jin J."/>
            <person name="Gao L."/>
            <person name="Zheng W."/>
            <person name="Hao B."/>
            <person name="Liu S.-M."/>
            <person name="Wang W."/>
            <person name="Yuan L."/>
            <person name="Cao M."/>
            <person name="McDermott J."/>
            <person name="Samudrala R."/>
            <person name="Wang J."/>
            <person name="Wong G.K.-S."/>
            <person name="Yang H."/>
        </authorList>
    </citation>
    <scope>NUCLEOTIDE SEQUENCE [LARGE SCALE GENOMIC DNA]</scope>
    <source>
        <strain>cv. 93-11</strain>
    </source>
</reference>
<reference key="3">
    <citation type="journal article" date="2005" name="Plant Physiol.">
        <title>Interacting proteins and differences in nuclear transport reveal specific functions for the NAP1 family proteins in plants.</title>
        <authorList>
            <person name="Dong A."/>
            <person name="Liu Z."/>
            <person name="Zhu Y."/>
            <person name="Yu F."/>
            <person name="Li Z."/>
            <person name="Cao K."/>
            <person name="Shen W.H."/>
        </authorList>
    </citation>
    <scope>SUBCELLULAR LOCATION</scope>
</reference>
<name>NAP1B_ORYSI</name>
<accession>B8AW64</accession>
<accession>Q70Z20</accession>
<feature type="chain" id="PRO_0000423687" description="Nucleosome assembly protein 1;2">
    <location>
        <begin position="1"/>
        <end position="361"/>
    </location>
</feature>
<feature type="propeptide" id="PRO_0000423688" description="Removed in mature form" evidence="2">
    <location>
        <begin position="362"/>
        <end position="364"/>
    </location>
</feature>
<feature type="region of interest" description="Disordered" evidence="4">
    <location>
        <begin position="250"/>
        <end position="269"/>
    </location>
</feature>
<feature type="region of interest" description="Disordered" evidence="4">
    <location>
        <begin position="301"/>
        <end position="364"/>
    </location>
</feature>
<feature type="coiled-coil region" evidence="3">
    <location>
        <begin position="32"/>
        <end position="86"/>
    </location>
</feature>
<feature type="short sequence motif" description="Nuclear export signal" evidence="3">
    <location>
        <begin position="53"/>
        <end position="68"/>
    </location>
</feature>
<feature type="short sequence motif" description="Nuclear localization signal" evidence="3">
    <location>
        <begin position="227"/>
        <end position="232"/>
    </location>
</feature>
<feature type="compositionally biased region" description="Acidic residues" evidence="4">
    <location>
        <begin position="259"/>
        <end position="269"/>
    </location>
</feature>
<feature type="compositionally biased region" description="Acidic residues" evidence="4">
    <location>
        <begin position="304"/>
        <end position="340"/>
    </location>
</feature>
<feature type="modified residue" description="Cysteine methyl ester" evidence="2">
    <location>
        <position position="361"/>
    </location>
</feature>
<feature type="lipid moiety-binding region" description="S-farnesyl cysteine" evidence="2">
    <location>
        <position position="361"/>
    </location>
</feature>
<organism>
    <name type="scientific">Oryza sativa subsp. indica</name>
    <name type="common">Rice</name>
    <dbReference type="NCBI Taxonomy" id="39946"/>
    <lineage>
        <taxon>Eukaryota</taxon>
        <taxon>Viridiplantae</taxon>
        <taxon>Streptophyta</taxon>
        <taxon>Embryophyta</taxon>
        <taxon>Tracheophyta</taxon>
        <taxon>Spermatophyta</taxon>
        <taxon>Magnoliopsida</taxon>
        <taxon>Liliopsida</taxon>
        <taxon>Poales</taxon>
        <taxon>Poaceae</taxon>
        <taxon>BOP clade</taxon>
        <taxon>Oryzoideae</taxon>
        <taxon>Oryzeae</taxon>
        <taxon>Oryzinae</taxon>
        <taxon>Oryza</taxon>
        <taxon>Oryza sativa</taxon>
    </lineage>
</organism>